<keyword id="KW-0687">Ribonucleoprotein</keyword>
<keyword id="KW-0689">Ribosomal protein</keyword>
<keyword id="KW-0694">RNA-binding</keyword>
<keyword id="KW-0699">rRNA-binding</keyword>
<name>RL15_LISW6</name>
<sequence>MKLHELKPSEGSRKERNRVGRGTGSGNGKTSGRGHKGQKARSGGGVRLGFEGGQLPLFRRIPKRGFTNINRKEFAIVNLDVLNRFEDGTEVTPELLIESGIIRNEKSGIKILSDGNIEKKLTVKANKFSAAAKEAIEAAGGKTEVI</sequence>
<accession>A0ALU9</accession>
<protein>
    <recommendedName>
        <fullName evidence="1">Large ribosomal subunit protein uL15</fullName>
    </recommendedName>
    <alternativeName>
        <fullName evidence="3">50S ribosomal protein L15</fullName>
    </alternativeName>
</protein>
<evidence type="ECO:0000255" key="1">
    <source>
        <dbReference type="HAMAP-Rule" id="MF_01341"/>
    </source>
</evidence>
<evidence type="ECO:0000256" key="2">
    <source>
        <dbReference type="SAM" id="MobiDB-lite"/>
    </source>
</evidence>
<evidence type="ECO:0000305" key="3"/>
<reference key="1">
    <citation type="journal article" date="2006" name="J. Bacteriol.">
        <title>Whole-genome sequence of Listeria welshimeri reveals common steps in genome reduction with Listeria innocua as compared to Listeria monocytogenes.</title>
        <authorList>
            <person name="Hain T."/>
            <person name="Steinweg C."/>
            <person name="Kuenne C.T."/>
            <person name="Billion A."/>
            <person name="Ghai R."/>
            <person name="Chatterjee S.S."/>
            <person name="Domann E."/>
            <person name="Kaerst U."/>
            <person name="Goesmann A."/>
            <person name="Bekel T."/>
            <person name="Bartels D."/>
            <person name="Kaiser O."/>
            <person name="Meyer F."/>
            <person name="Puehler A."/>
            <person name="Weisshaar B."/>
            <person name="Wehland J."/>
            <person name="Liang C."/>
            <person name="Dandekar T."/>
            <person name="Lampidis R."/>
            <person name="Kreft J."/>
            <person name="Goebel W."/>
            <person name="Chakraborty T."/>
        </authorList>
    </citation>
    <scope>NUCLEOTIDE SEQUENCE [LARGE SCALE GENOMIC DNA]</scope>
    <source>
        <strain>ATCC 35897 / DSM 20650 / CCUG 15529 / CIP 8149 / NCTC 11857 / SLCC 5334 / V8</strain>
    </source>
</reference>
<comment type="function">
    <text evidence="1">Binds to the 23S rRNA.</text>
</comment>
<comment type="subunit">
    <text evidence="1">Part of the 50S ribosomal subunit.</text>
</comment>
<comment type="similarity">
    <text evidence="1">Belongs to the universal ribosomal protein uL15 family.</text>
</comment>
<feature type="chain" id="PRO_1000054486" description="Large ribosomal subunit protein uL15">
    <location>
        <begin position="1"/>
        <end position="146"/>
    </location>
</feature>
<feature type="region of interest" description="Disordered" evidence="2">
    <location>
        <begin position="1"/>
        <end position="50"/>
    </location>
</feature>
<feature type="compositionally biased region" description="Basic and acidic residues" evidence="2">
    <location>
        <begin position="1"/>
        <end position="18"/>
    </location>
</feature>
<feature type="compositionally biased region" description="Gly residues" evidence="2">
    <location>
        <begin position="21"/>
        <end position="31"/>
    </location>
</feature>
<dbReference type="EMBL" id="AM263198">
    <property type="protein sequence ID" value="CAK21981.1"/>
    <property type="molecule type" value="Genomic_DNA"/>
</dbReference>
<dbReference type="RefSeq" id="WP_011703283.1">
    <property type="nucleotide sequence ID" value="NC_008555.1"/>
</dbReference>
<dbReference type="SMR" id="A0ALU9"/>
<dbReference type="STRING" id="386043.lwe2563"/>
<dbReference type="GeneID" id="61190487"/>
<dbReference type="KEGG" id="lwe:lwe2563"/>
<dbReference type="eggNOG" id="COG0200">
    <property type="taxonomic scope" value="Bacteria"/>
</dbReference>
<dbReference type="HOGENOM" id="CLU_055188_4_2_9"/>
<dbReference type="OrthoDB" id="9810293at2"/>
<dbReference type="Proteomes" id="UP000000779">
    <property type="component" value="Chromosome"/>
</dbReference>
<dbReference type="GO" id="GO:0022625">
    <property type="term" value="C:cytosolic large ribosomal subunit"/>
    <property type="evidence" value="ECO:0007669"/>
    <property type="project" value="TreeGrafter"/>
</dbReference>
<dbReference type="GO" id="GO:0019843">
    <property type="term" value="F:rRNA binding"/>
    <property type="evidence" value="ECO:0007669"/>
    <property type="project" value="UniProtKB-UniRule"/>
</dbReference>
<dbReference type="GO" id="GO:0003735">
    <property type="term" value="F:structural constituent of ribosome"/>
    <property type="evidence" value="ECO:0007669"/>
    <property type="project" value="InterPro"/>
</dbReference>
<dbReference type="GO" id="GO:0006412">
    <property type="term" value="P:translation"/>
    <property type="evidence" value="ECO:0007669"/>
    <property type="project" value="UniProtKB-UniRule"/>
</dbReference>
<dbReference type="FunFam" id="3.100.10.10:FF:000004">
    <property type="entry name" value="50S ribosomal protein L15"/>
    <property type="match status" value="1"/>
</dbReference>
<dbReference type="Gene3D" id="3.100.10.10">
    <property type="match status" value="1"/>
</dbReference>
<dbReference type="HAMAP" id="MF_01341">
    <property type="entry name" value="Ribosomal_uL15"/>
    <property type="match status" value="1"/>
</dbReference>
<dbReference type="InterPro" id="IPR030878">
    <property type="entry name" value="Ribosomal_uL15"/>
</dbReference>
<dbReference type="InterPro" id="IPR021131">
    <property type="entry name" value="Ribosomal_uL15/eL18"/>
</dbReference>
<dbReference type="InterPro" id="IPR036227">
    <property type="entry name" value="Ribosomal_uL15/eL18_sf"/>
</dbReference>
<dbReference type="InterPro" id="IPR005749">
    <property type="entry name" value="Ribosomal_uL15_bac-type"/>
</dbReference>
<dbReference type="InterPro" id="IPR001196">
    <property type="entry name" value="Ribosomal_uL15_CS"/>
</dbReference>
<dbReference type="NCBIfam" id="TIGR01071">
    <property type="entry name" value="rplO_bact"/>
    <property type="match status" value="1"/>
</dbReference>
<dbReference type="PANTHER" id="PTHR12934">
    <property type="entry name" value="50S RIBOSOMAL PROTEIN L15"/>
    <property type="match status" value="1"/>
</dbReference>
<dbReference type="PANTHER" id="PTHR12934:SF11">
    <property type="entry name" value="LARGE RIBOSOMAL SUBUNIT PROTEIN UL15M"/>
    <property type="match status" value="1"/>
</dbReference>
<dbReference type="Pfam" id="PF00828">
    <property type="entry name" value="Ribosomal_L27A"/>
    <property type="match status" value="1"/>
</dbReference>
<dbReference type="SUPFAM" id="SSF52080">
    <property type="entry name" value="Ribosomal proteins L15p and L18e"/>
    <property type="match status" value="1"/>
</dbReference>
<dbReference type="PROSITE" id="PS00475">
    <property type="entry name" value="RIBOSOMAL_L15"/>
    <property type="match status" value="1"/>
</dbReference>
<gene>
    <name evidence="1" type="primary">rplO</name>
    <name type="ordered locus">lwe2563</name>
</gene>
<organism>
    <name type="scientific">Listeria welshimeri serovar 6b (strain ATCC 35897 / DSM 20650 / CCUG 15529 / CIP 8149 / NCTC 11857 / SLCC 5334 / V8)</name>
    <dbReference type="NCBI Taxonomy" id="386043"/>
    <lineage>
        <taxon>Bacteria</taxon>
        <taxon>Bacillati</taxon>
        <taxon>Bacillota</taxon>
        <taxon>Bacilli</taxon>
        <taxon>Bacillales</taxon>
        <taxon>Listeriaceae</taxon>
        <taxon>Listeria</taxon>
    </lineage>
</organism>
<proteinExistence type="inferred from homology"/>